<evidence type="ECO:0000250" key="1">
    <source>
        <dbReference type="UniProtKB" id="Q96MF7"/>
    </source>
</evidence>
<evidence type="ECO:0000255" key="2">
    <source>
        <dbReference type="PROSITE-ProRule" id="PRU00452"/>
    </source>
</evidence>
<evidence type="ECO:0000305" key="3"/>
<gene>
    <name type="primary">NSMCE2</name>
    <name type="synonym">MMS21</name>
</gene>
<sequence>MPGRSTSSSSSGSTGFISFSGVESALSSLKTFQSCISSGMDTASSVALDLVETQTEVSSEYSMDKAMVEFAMMDRELNHYLKAVQSTINHVKEERSEKIPDLKLLVEKKFLALQNKNSDADFQNNEKFVQFKQQLKELKKQYGLQSDREADITEGVDEDMIVTQSQTNFICPITQLEMKKPVKNKVCGHTYEEEAIVRMIESKHERKKKACCPKIGCSHVDMRMSDLIQDEALRRAIESHKKRRRQSN</sequence>
<comment type="function">
    <text evidence="1">E3 SUMO-protein ligase component of the SMC5-SMC6 complex, a complex involved in DNA double-strand break repair by homologous recombination. Is not be required for the stability of the complex. The complex may promote sister chromatid homologous recombination by recruiting the SMC1-SMC3 cohesin complex to double-strand breaks. Acts as an E3 ligase mediating SUMO attachment to various proteins such as SMC6L1 and TSNAX, the shelterin complex subunits TERF1, TERF2, TINF2 and TERF2IP, RAD51AP1, and maybe the cohesin components RAD21 and STAG2. Required for recruitment of telomeres to PML nuclear bodies. Required for sister chromatid cohesion during prometaphase and mitotic progression.</text>
</comment>
<comment type="pathway">
    <text evidence="1">Protein modification; protein sumoylation.</text>
</comment>
<comment type="subunit">
    <text evidence="1">Component of the SMC5-SMC6 complex which consists at least of SMC5, SMC6, NSMCE2, NSMCE1, NSMCE4A or EID3 and NSMCE3.</text>
</comment>
<comment type="subcellular location">
    <subcellularLocation>
        <location evidence="1">Nucleus</location>
    </subcellularLocation>
    <subcellularLocation>
        <location evidence="1">Chromosome</location>
        <location evidence="1">Telomere</location>
    </subcellularLocation>
    <subcellularLocation>
        <location evidence="1">Nucleus</location>
        <location evidence="1">PML body</location>
    </subcellularLocation>
    <text evidence="1">Localizes to PML nuclear bodies in ALT cell lines.</text>
</comment>
<comment type="PTM">
    <text evidence="1">Sumoylated, possibly via autosumoylation.</text>
</comment>
<comment type="similarity">
    <text evidence="3">Belongs to the NSE2 family.</text>
</comment>
<dbReference type="EC" id="2.3.2.-" evidence="1"/>
<dbReference type="EMBL" id="BC109850">
    <property type="protein sequence ID" value="AAI09851.1"/>
    <property type="molecule type" value="mRNA"/>
</dbReference>
<dbReference type="RefSeq" id="NP_001069265.1">
    <property type="nucleotide sequence ID" value="NM_001075797.2"/>
</dbReference>
<dbReference type="SMR" id="Q32KY9"/>
<dbReference type="FunCoup" id="Q32KY9">
    <property type="interactions" value="3187"/>
</dbReference>
<dbReference type="STRING" id="9913.ENSBTAP00000012363"/>
<dbReference type="PaxDb" id="9913-ENSBTAP00000012363"/>
<dbReference type="GeneID" id="519974"/>
<dbReference type="KEGG" id="bta:519974"/>
<dbReference type="CTD" id="286053"/>
<dbReference type="eggNOG" id="KOG2979">
    <property type="taxonomic scope" value="Eukaryota"/>
</dbReference>
<dbReference type="InParanoid" id="Q32KY9"/>
<dbReference type="OrthoDB" id="26899at2759"/>
<dbReference type="UniPathway" id="UPA00886"/>
<dbReference type="Proteomes" id="UP000009136">
    <property type="component" value="Unplaced"/>
</dbReference>
<dbReference type="GO" id="GO:0000781">
    <property type="term" value="C:chromosome, telomeric region"/>
    <property type="evidence" value="ECO:0000250"/>
    <property type="project" value="UniProtKB"/>
</dbReference>
<dbReference type="GO" id="GO:0005634">
    <property type="term" value="C:nucleus"/>
    <property type="evidence" value="ECO:0000318"/>
    <property type="project" value="GO_Central"/>
</dbReference>
<dbReference type="GO" id="GO:0016605">
    <property type="term" value="C:PML body"/>
    <property type="evidence" value="ECO:0000250"/>
    <property type="project" value="UniProtKB"/>
</dbReference>
<dbReference type="GO" id="GO:0030915">
    <property type="term" value="C:Smc5-Smc6 complex"/>
    <property type="evidence" value="ECO:0000250"/>
    <property type="project" value="UniProtKB"/>
</dbReference>
<dbReference type="GO" id="GO:0061665">
    <property type="term" value="F:SUMO ligase activity"/>
    <property type="evidence" value="ECO:0000318"/>
    <property type="project" value="GO_Central"/>
</dbReference>
<dbReference type="GO" id="GO:0019789">
    <property type="term" value="F:SUMO transferase activity"/>
    <property type="evidence" value="ECO:0000250"/>
    <property type="project" value="UniProtKB"/>
</dbReference>
<dbReference type="GO" id="GO:0004842">
    <property type="term" value="F:ubiquitin-protein transferase activity"/>
    <property type="evidence" value="ECO:0007669"/>
    <property type="project" value="InterPro"/>
</dbReference>
<dbReference type="GO" id="GO:0008270">
    <property type="term" value="F:zinc ion binding"/>
    <property type="evidence" value="ECO:0007669"/>
    <property type="project" value="UniProtKB-KW"/>
</dbReference>
<dbReference type="GO" id="GO:0051301">
    <property type="term" value="P:cell division"/>
    <property type="evidence" value="ECO:0007669"/>
    <property type="project" value="UniProtKB-KW"/>
</dbReference>
<dbReference type="GO" id="GO:0090398">
    <property type="term" value="P:cellular senescence"/>
    <property type="evidence" value="ECO:0000250"/>
    <property type="project" value="UniProtKB"/>
</dbReference>
<dbReference type="GO" id="GO:0000724">
    <property type="term" value="P:double-strand break repair via homologous recombination"/>
    <property type="evidence" value="ECO:0000250"/>
    <property type="project" value="UniProtKB"/>
</dbReference>
<dbReference type="GO" id="GO:0034184">
    <property type="term" value="P:positive regulation of maintenance of mitotic sister chromatid cohesion"/>
    <property type="evidence" value="ECO:0000250"/>
    <property type="project" value="UniProtKB"/>
</dbReference>
<dbReference type="GO" id="GO:0045842">
    <property type="term" value="P:positive regulation of mitotic metaphase/anaphase transition"/>
    <property type="evidence" value="ECO:0000250"/>
    <property type="project" value="UniProtKB"/>
</dbReference>
<dbReference type="GO" id="GO:0016925">
    <property type="term" value="P:protein sumoylation"/>
    <property type="evidence" value="ECO:0000318"/>
    <property type="project" value="GO_Central"/>
</dbReference>
<dbReference type="GO" id="GO:0016567">
    <property type="term" value="P:protein ubiquitination"/>
    <property type="evidence" value="ECO:0007669"/>
    <property type="project" value="InterPro"/>
</dbReference>
<dbReference type="GO" id="GO:0000722">
    <property type="term" value="P:telomere maintenance via recombination"/>
    <property type="evidence" value="ECO:0000250"/>
    <property type="project" value="UniProtKB"/>
</dbReference>
<dbReference type="CDD" id="cd16651">
    <property type="entry name" value="SPL-RING_NSE2"/>
    <property type="match status" value="1"/>
</dbReference>
<dbReference type="FunFam" id="3.30.40.10:FF:000343">
    <property type="entry name" value="E3 SUMO-protein ligase NSE2 isoform X1"/>
    <property type="match status" value="1"/>
</dbReference>
<dbReference type="Gene3D" id="3.30.40.10">
    <property type="entry name" value="Zinc/RING finger domain, C3HC4 (zinc finger)"/>
    <property type="match status" value="1"/>
</dbReference>
<dbReference type="InterPro" id="IPR026846">
    <property type="entry name" value="Nse2(Mms21)"/>
</dbReference>
<dbReference type="InterPro" id="IPR003613">
    <property type="entry name" value="Ubox_domain"/>
</dbReference>
<dbReference type="InterPro" id="IPR004181">
    <property type="entry name" value="Znf_MIZ"/>
</dbReference>
<dbReference type="InterPro" id="IPR013083">
    <property type="entry name" value="Znf_RING/FYVE/PHD"/>
</dbReference>
<dbReference type="PANTHER" id="PTHR21330">
    <property type="entry name" value="E3 SUMO-PROTEIN LIGASE NSE2"/>
    <property type="match status" value="1"/>
</dbReference>
<dbReference type="PANTHER" id="PTHR21330:SF1">
    <property type="entry name" value="E3 SUMO-PROTEIN LIGASE NSE2"/>
    <property type="match status" value="1"/>
</dbReference>
<dbReference type="Pfam" id="PF11789">
    <property type="entry name" value="zf-Nse"/>
    <property type="match status" value="1"/>
</dbReference>
<dbReference type="SMART" id="SM00504">
    <property type="entry name" value="Ubox"/>
    <property type="match status" value="1"/>
</dbReference>
<dbReference type="SUPFAM" id="SSF57850">
    <property type="entry name" value="RING/U-box"/>
    <property type="match status" value="1"/>
</dbReference>
<dbReference type="PROSITE" id="PS51044">
    <property type="entry name" value="ZF_SP_RING"/>
    <property type="match status" value="1"/>
</dbReference>
<proteinExistence type="evidence at transcript level"/>
<reference key="1">
    <citation type="submission" date="2005-11" db="EMBL/GenBank/DDBJ databases">
        <authorList>
            <consortium name="NIH - Mammalian Gene Collection (MGC) project"/>
        </authorList>
    </citation>
    <scope>NUCLEOTIDE SEQUENCE [LARGE SCALE MRNA]</scope>
    <source>
        <strain>Crossbred X Angus</strain>
        <tissue>Liver</tissue>
    </source>
</reference>
<name>NSE2_BOVIN</name>
<organism>
    <name type="scientific">Bos taurus</name>
    <name type="common">Bovine</name>
    <dbReference type="NCBI Taxonomy" id="9913"/>
    <lineage>
        <taxon>Eukaryota</taxon>
        <taxon>Metazoa</taxon>
        <taxon>Chordata</taxon>
        <taxon>Craniata</taxon>
        <taxon>Vertebrata</taxon>
        <taxon>Euteleostomi</taxon>
        <taxon>Mammalia</taxon>
        <taxon>Eutheria</taxon>
        <taxon>Laurasiatheria</taxon>
        <taxon>Artiodactyla</taxon>
        <taxon>Ruminantia</taxon>
        <taxon>Pecora</taxon>
        <taxon>Bovidae</taxon>
        <taxon>Bovinae</taxon>
        <taxon>Bos</taxon>
    </lineage>
</organism>
<feature type="chain" id="PRO_0000270938" description="E3 SUMO-protein ligase NSE2">
    <location>
        <begin position="1"/>
        <end position="248"/>
    </location>
</feature>
<feature type="zinc finger region" description="SP-RING-type" evidence="2">
    <location>
        <begin position="156"/>
        <end position="242"/>
    </location>
</feature>
<feature type="binding site" evidence="2">
    <location>
        <position position="187"/>
    </location>
    <ligand>
        <name>Zn(2+)</name>
        <dbReference type="ChEBI" id="CHEBI:29105"/>
    </ligand>
</feature>
<feature type="binding site" evidence="2">
    <location>
        <position position="189"/>
    </location>
    <ligand>
        <name>Zn(2+)</name>
        <dbReference type="ChEBI" id="CHEBI:29105"/>
    </ligand>
</feature>
<feature type="binding site" evidence="2">
    <location>
        <position position="212"/>
    </location>
    <ligand>
        <name>Zn(2+)</name>
        <dbReference type="ChEBI" id="CHEBI:29105"/>
    </ligand>
</feature>
<feature type="binding site" evidence="2">
    <location>
        <position position="217"/>
    </location>
    <ligand>
        <name>Zn(2+)</name>
        <dbReference type="ChEBI" id="CHEBI:29105"/>
    </ligand>
</feature>
<feature type="modified residue" description="N-acetylmethionine" evidence="1">
    <location>
        <position position="1"/>
    </location>
</feature>
<feature type="modified residue" description="Phosphoserine" evidence="1">
    <location>
        <position position="118"/>
    </location>
</feature>
<feature type="cross-link" description="Glycyl lysine isopeptide (Lys-Gly) (interchain with G-Cter in SUMO2)" evidence="1">
    <location>
        <position position="92"/>
    </location>
</feature>
<feature type="cross-link" description="Glycyl lysine isopeptide (Lys-Gly) (interchain with G-Cter in SUMO2)" evidence="1">
    <location>
        <position position="109"/>
    </location>
</feature>
<feature type="cross-link" description="Glycyl lysine isopeptide (Lys-Gly) (interchain with G-Cter in SUMO2)" evidence="1">
    <location>
        <position position="127"/>
    </location>
</feature>
<feature type="cross-link" description="Glycyl lysine isopeptide (Lys-Gly) (interchain with G-Cter in SUMO2)" evidence="1">
    <location>
        <position position="132"/>
    </location>
</feature>
<protein>
    <recommendedName>
        <fullName>E3 SUMO-protein ligase NSE2</fullName>
        <ecNumber evidence="1">2.3.2.-</ecNumber>
    </recommendedName>
    <alternativeName>
        <fullName evidence="3">E3 SUMO-protein transferase NSE2</fullName>
    </alternativeName>
    <alternativeName>
        <fullName>Non-structural maintenance of chromosomes element 2 homolog</fullName>
        <shortName>Non-SMC element 2 homolog</shortName>
    </alternativeName>
</protein>
<keyword id="KW-0007">Acetylation</keyword>
<keyword id="KW-0131">Cell cycle</keyword>
<keyword id="KW-0132">Cell division</keyword>
<keyword id="KW-0158">Chromosome</keyword>
<keyword id="KW-0227">DNA damage</keyword>
<keyword id="KW-0233">DNA recombination</keyword>
<keyword id="KW-0234">DNA repair</keyword>
<keyword id="KW-1017">Isopeptide bond</keyword>
<keyword id="KW-0479">Metal-binding</keyword>
<keyword id="KW-0498">Mitosis</keyword>
<keyword id="KW-0539">Nucleus</keyword>
<keyword id="KW-0597">Phosphoprotein</keyword>
<keyword id="KW-1185">Reference proteome</keyword>
<keyword id="KW-0779">Telomere</keyword>
<keyword id="KW-0808">Transferase</keyword>
<keyword id="KW-0832">Ubl conjugation</keyword>
<keyword id="KW-0833">Ubl conjugation pathway</keyword>
<keyword id="KW-0862">Zinc</keyword>
<keyword id="KW-0863">Zinc-finger</keyword>
<accession>Q32KY9</accession>